<dbReference type="EMBL" id="CP000247">
    <property type="protein sequence ID" value="ABG70295.1"/>
    <property type="molecule type" value="Genomic_DNA"/>
</dbReference>
<dbReference type="RefSeq" id="WP_000638016.1">
    <property type="nucleotide sequence ID" value="NC_008253.1"/>
</dbReference>
<dbReference type="SMR" id="Q0TFI4"/>
<dbReference type="KEGG" id="ecp:ECP_2301"/>
<dbReference type="HOGENOM" id="CLU_131462_5_1_6"/>
<dbReference type="UniPathway" id="UPA00030"/>
<dbReference type="Proteomes" id="UP000009182">
    <property type="component" value="Chromosome"/>
</dbReference>
<dbReference type="GO" id="GO:0005886">
    <property type="term" value="C:plasma membrane"/>
    <property type="evidence" value="ECO:0007669"/>
    <property type="project" value="UniProtKB-SubCell"/>
</dbReference>
<dbReference type="GO" id="GO:1901505">
    <property type="term" value="F:carbohydrate derivative transmembrane transporter activity"/>
    <property type="evidence" value="ECO:0007669"/>
    <property type="project" value="InterPro"/>
</dbReference>
<dbReference type="GO" id="GO:0009245">
    <property type="term" value="P:lipid A biosynthetic process"/>
    <property type="evidence" value="ECO:0007669"/>
    <property type="project" value="UniProtKB-UniRule"/>
</dbReference>
<dbReference type="GO" id="GO:0009103">
    <property type="term" value="P:lipopolysaccharide biosynthetic process"/>
    <property type="evidence" value="ECO:0007669"/>
    <property type="project" value="UniProtKB-UniRule"/>
</dbReference>
<dbReference type="FunFam" id="1.10.3730.20:FF:000002">
    <property type="entry name" value="Probable 4-amino-4-deoxy-L-arabinose-phosphoundecaprenol flippase subunit ArnE"/>
    <property type="match status" value="1"/>
</dbReference>
<dbReference type="Gene3D" id="1.10.3730.20">
    <property type="match status" value="1"/>
</dbReference>
<dbReference type="HAMAP" id="MF_01869">
    <property type="entry name" value="Flippase_ArnE"/>
    <property type="match status" value="1"/>
</dbReference>
<dbReference type="InterPro" id="IPR000620">
    <property type="entry name" value="EamA_dom"/>
</dbReference>
<dbReference type="InterPro" id="IPR022883">
    <property type="entry name" value="Flippase_ArnE"/>
</dbReference>
<dbReference type="InterPro" id="IPR000390">
    <property type="entry name" value="Small_drug/metabolite_transptr"/>
</dbReference>
<dbReference type="NCBIfam" id="NF011625">
    <property type="entry name" value="PRK15051.1"/>
    <property type="match status" value="1"/>
</dbReference>
<dbReference type="PANTHER" id="PTHR30561:SF23">
    <property type="entry name" value="4-AMINO-4-DEOXY-L-ARABINOSE-PHOSPHOUNDECAPRENOL FLIPPASE SUBUNIT ARNE-RELATED"/>
    <property type="match status" value="1"/>
</dbReference>
<dbReference type="PANTHER" id="PTHR30561">
    <property type="entry name" value="SMR FAMILY PROTON-DEPENDENT DRUG EFFLUX TRANSPORTER SUGE"/>
    <property type="match status" value="1"/>
</dbReference>
<dbReference type="Pfam" id="PF00892">
    <property type="entry name" value="EamA"/>
    <property type="match status" value="1"/>
</dbReference>
<dbReference type="SUPFAM" id="SSF103481">
    <property type="entry name" value="Multidrug resistance efflux transporter EmrE"/>
    <property type="match status" value="1"/>
</dbReference>
<organism>
    <name type="scientific">Escherichia coli O6:K15:H31 (strain 536 / UPEC)</name>
    <dbReference type="NCBI Taxonomy" id="362663"/>
    <lineage>
        <taxon>Bacteria</taxon>
        <taxon>Pseudomonadati</taxon>
        <taxon>Pseudomonadota</taxon>
        <taxon>Gammaproteobacteria</taxon>
        <taxon>Enterobacterales</taxon>
        <taxon>Enterobacteriaceae</taxon>
        <taxon>Escherichia</taxon>
    </lineage>
</organism>
<reference key="1">
    <citation type="journal article" date="2006" name="Mol. Microbiol.">
        <title>Role of pathogenicity island-associated integrases in the genome plasticity of uropathogenic Escherichia coli strain 536.</title>
        <authorList>
            <person name="Hochhut B."/>
            <person name="Wilde C."/>
            <person name="Balling G."/>
            <person name="Middendorf B."/>
            <person name="Dobrindt U."/>
            <person name="Brzuszkiewicz E."/>
            <person name="Gottschalk G."/>
            <person name="Carniel E."/>
            <person name="Hacker J."/>
        </authorList>
    </citation>
    <scope>NUCLEOTIDE SEQUENCE [LARGE SCALE GENOMIC DNA]</scope>
    <source>
        <strain>536 / UPEC</strain>
    </source>
</reference>
<evidence type="ECO:0000255" key="1"/>
<evidence type="ECO:0000255" key="2">
    <source>
        <dbReference type="HAMAP-Rule" id="MF_01869"/>
    </source>
</evidence>
<keyword id="KW-0997">Cell inner membrane</keyword>
<keyword id="KW-1003">Cell membrane</keyword>
<keyword id="KW-0441">Lipid A biosynthesis</keyword>
<keyword id="KW-0444">Lipid biosynthesis</keyword>
<keyword id="KW-0443">Lipid metabolism</keyword>
<keyword id="KW-0448">Lipopolysaccharide biosynthesis</keyword>
<keyword id="KW-0472">Membrane</keyword>
<keyword id="KW-0812">Transmembrane</keyword>
<keyword id="KW-1133">Transmembrane helix</keyword>
<keyword id="KW-0813">Transport</keyword>
<feature type="chain" id="PRO_0000382970" description="Probable 4-amino-4-deoxy-L-arabinose-phosphoundecaprenol flippase subunit ArnE">
    <location>
        <begin position="1"/>
        <end position="111"/>
    </location>
</feature>
<feature type="topological domain" description="Cytoplasmic" evidence="1">
    <location>
        <begin position="1"/>
        <end position="35"/>
    </location>
</feature>
<feature type="transmembrane region" description="Helical" evidence="2">
    <location>
        <begin position="36"/>
        <end position="56"/>
    </location>
</feature>
<feature type="topological domain" description="Periplasmic" evidence="1">
    <location>
        <begin position="57"/>
        <end position="60"/>
    </location>
</feature>
<feature type="transmembrane region" description="Helical" evidence="2">
    <location>
        <begin position="61"/>
        <end position="81"/>
    </location>
</feature>
<feature type="topological domain" description="Cytoplasmic" evidence="1">
    <location>
        <begin position="82"/>
        <end position="87"/>
    </location>
</feature>
<feature type="transmembrane region" description="Helical" evidence="2">
    <location>
        <begin position="88"/>
        <end position="108"/>
    </location>
</feature>
<feature type="topological domain" description="Periplasmic" evidence="1">
    <location>
        <begin position="109"/>
        <end position="111"/>
    </location>
</feature>
<feature type="domain" description="EamA" evidence="2">
    <location>
        <begin position="40"/>
        <end position="109"/>
    </location>
</feature>
<gene>
    <name evidence="2" type="primary">arnE</name>
    <name type="ordered locus">ECP_2301</name>
</gene>
<sequence length="111" mass="12166">MIWLTLVFASLLSVAGQLCQKQATCFAAVNKRRKHIVLWLGLALACLGLAMVLWLLVLQNVPVGIAYPMLSLNFVWVTLAAVKLWHEPVSLRHWCGVAFIIGGIVILGSTV</sequence>
<name>ARNE_ECOL5</name>
<proteinExistence type="inferred from homology"/>
<comment type="function">
    <text evidence="2">Translocates 4-amino-4-deoxy-L-arabinose-phosphoundecaprenol (alpha-L-Ara4N-phosphoundecaprenol) from the cytoplasmic to the periplasmic side of the inner membrane.</text>
</comment>
<comment type="pathway">
    <text evidence="2">Bacterial outer membrane biogenesis; lipopolysaccharide biosynthesis.</text>
</comment>
<comment type="subunit">
    <text evidence="2">Heterodimer of ArnE and ArnF.</text>
</comment>
<comment type="subcellular location">
    <subcellularLocation>
        <location evidence="2">Cell inner membrane</location>
        <topology evidence="2">Multi-pass membrane protein</topology>
    </subcellularLocation>
</comment>
<comment type="similarity">
    <text evidence="2">Belongs to the ArnE family.</text>
</comment>
<protein>
    <recommendedName>
        <fullName evidence="2">Probable 4-amino-4-deoxy-L-arabinose-phosphoundecaprenol flippase subunit ArnE</fullName>
        <shortName evidence="2">L-Ara4N-phosphoundecaprenol flippase subunit ArnE</shortName>
    </recommendedName>
    <alternativeName>
        <fullName evidence="2">Undecaprenyl phosphate-aminoarabinose flippase subunit ArnE</fullName>
    </alternativeName>
</protein>
<accession>Q0TFI4</accession>